<organism>
    <name type="scientific">Geobacter sulfurreducens (strain ATCC 51573 / DSM 12127 / PCA)</name>
    <dbReference type="NCBI Taxonomy" id="243231"/>
    <lineage>
        <taxon>Bacteria</taxon>
        <taxon>Pseudomonadati</taxon>
        <taxon>Thermodesulfobacteriota</taxon>
        <taxon>Desulfuromonadia</taxon>
        <taxon>Geobacterales</taxon>
        <taxon>Geobacteraceae</taxon>
        <taxon>Geobacter</taxon>
    </lineage>
</organism>
<gene>
    <name evidence="1" type="primary">leuC</name>
    <name type="ordered locus">GSU1903</name>
</gene>
<protein>
    <recommendedName>
        <fullName evidence="1">3-isopropylmalate dehydratase large subunit</fullName>
        <ecNumber evidence="1">4.2.1.33</ecNumber>
    </recommendedName>
    <alternativeName>
        <fullName evidence="1">Alpha-IPM isomerase</fullName>
        <shortName evidence="1">IPMI</shortName>
    </alternativeName>
    <alternativeName>
        <fullName evidence="1">Isopropylmalate isomerase</fullName>
    </alternativeName>
</protein>
<evidence type="ECO:0000255" key="1">
    <source>
        <dbReference type="HAMAP-Rule" id="MF_01027"/>
    </source>
</evidence>
<comment type="function">
    <text evidence="1">Catalyzes the isomerization between 2-isopropylmalate and 3-isopropylmalate, via the formation of 2-isopropylmaleate.</text>
</comment>
<comment type="catalytic activity">
    <reaction evidence="1">
        <text>(2R,3S)-3-isopropylmalate = (2S)-2-isopropylmalate</text>
        <dbReference type="Rhea" id="RHEA:32287"/>
        <dbReference type="ChEBI" id="CHEBI:1178"/>
        <dbReference type="ChEBI" id="CHEBI:35121"/>
        <dbReference type="EC" id="4.2.1.33"/>
    </reaction>
</comment>
<comment type="cofactor">
    <cofactor evidence="1">
        <name>[4Fe-4S] cluster</name>
        <dbReference type="ChEBI" id="CHEBI:49883"/>
    </cofactor>
    <text evidence="1">Binds 1 [4Fe-4S] cluster per subunit.</text>
</comment>
<comment type="pathway">
    <text evidence="1">Amino-acid biosynthesis; L-leucine biosynthesis; L-leucine from 3-methyl-2-oxobutanoate: step 2/4.</text>
</comment>
<comment type="subunit">
    <text evidence="1">Heterodimer of LeuC and LeuD.</text>
</comment>
<comment type="similarity">
    <text evidence="1">Belongs to the aconitase/IPM isomerase family. LeuC type 2 subfamily.</text>
</comment>
<name>LEUC_GEOSL</name>
<accession>Q74BX5</accession>
<feature type="chain" id="PRO_1000063649" description="3-isopropylmalate dehydratase large subunit">
    <location>
        <begin position="1"/>
        <end position="427"/>
    </location>
</feature>
<feature type="binding site" evidence="1">
    <location>
        <position position="308"/>
    </location>
    <ligand>
        <name>[4Fe-4S] cluster</name>
        <dbReference type="ChEBI" id="CHEBI:49883"/>
    </ligand>
</feature>
<feature type="binding site" evidence="1">
    <location>
        <position position="368"/>
    </location>
    <ligand>
        <name>[4Fe-4S] cluster</name>
        <dbReference type="ChEBI" id="CHEBI:49883"/>
    </ligand>
</feature>
<feature type="binding site" evidence="1">
    <location>
        <position position="371"/>
    </location>
    <ligand>
        <name>[4Fe-4S] cluster</name>
        <dbReference type="ChEBI" id="CHEBI:49883"/>
    </ligand>
</feature>
<sequence length="427" mass="46173">MGKTIAEKIFASHLVDEPFAGTKVLRLDVVMCHEITTPIAIADLMARGKDRVFDPTKIKAVIDHVTPSKDSKTATQAKMLRDWARRHGIVDFFDVGANGVCHALFPEKGFIRPGYTVIMGDSHTCTHGAFGAFAAGIGTTDLEVGILKGVCAFREPKTIRINLNGSLPEGVYAKDVILHVIGRIGVNGATDRVMEFRGSVVDTMTMESRMTLCNMAIEAGGTSGICMPDMVTVDYLWPFLKDEYQSREAALAAFSLWRSDEDAVYEQVLDFDVSSLEPIVTFGYKPDQVKPVSEIAGTPVDQVYLGSCTNGRLEDLRIAARILKGKKIAPTVRGILSPATPKIYQDAMREGLIDIFMEAGFCVTNPTCGACLGMSNGVLAEGEVCASTTNRNFMGRMGKGGMVHLMSPATSAATAIEGKIADPRKYL</sequence>
<dbReference type="EC" id="4.2.1.33" evidence="1"/>
<dbReference type="EMBL" id="AE017180">
    <property type="protein sequence ID" value="AAR35279.1"/>
    <property type="molecule type" value="Genomic_DNA"/>
</dbReference>
<dbReference type="RefSeq" id="NP_952952.1">
    <property type="nucleotide sequence ID" value="NC_002939.5"/>
</dbReference>
<dbReference type="RefSeq" id="WP_010942548.1">
    <property type="nucleotide sequence ID" value="NC_002939.5"/>
</dbReference>
<dbReference type="SMR" id="Q74BX5"/>
<dbReference type="FunCoup" id="Q74BX5">
    <property type="interactions" value="511"/>
</dbReference>
<dbReference type="STRING" id="243231.GSU1903"/>
<dbReference type="DNASU" id="2688457"/>
<dbReference type="EnsemblBacteria" id="AAR35279">
    <property type="protein sequence ID" value="AAR35279"/>
    <property type="gene ID" value="GSU1903"/>
</dbReference>
<dbReference type="KEGG" id="gsu:GSU1903"/>
<dbReference type="PATRIC" id="fig|243231.5.peg.1941"/>
<dbReference type="eggNOG" id="COG0065">
    <property type="taxonomic scope" value="Bacteria"/>
</dbReference>
<dbReference type="HOGENOM" id="CLU_006714_3_4_7"/>
<dbReference type="InParanoid" id="Q74BX5"/>
<dbReference type="OrthoDB" id="9764318at2"/>
<dbReference type="UniPathway" id="UPA00048">
    <property type="reaction ID" value="UER00071"/>
</dbReference>
<dbReference type="Proteomes" id="UP000000577">
    <property type="component" value="Chromosome"/>
</dbReference>
<dbReference type="GO" id="GO:0003861">
    <property type="term" value="F:3-isopropylmalate dehydratase activity"/>
    <property type="evidence" value="ECO:0007669"/>
    <property type="project" value="UniProtKB-UniRule"/>
</dbReference>
<dbReference type="GO" id="GO:0051539">
    <property type="term" value="F:4 iron, 4 sulfur cluster binding"/>
    <property type="evidence" value="ECO:0007669"/>
    <property type="project" value="UniProtKB-KW"/>
</dbReference>
<dbReference type="GO" id="GO:0046872">
    <property type="term" value="F:metal ion binding"/>
    <property type="evidence" value="ECO:0007669"/>
    <property type="project" value="UniProtKB-KW"/>
</dbReference>
<dbReference type="GO" id="GO:0009098">
    <property type="term" value="P:L-leucine biosynthetic process"/>
    <property type="evidence" value="ECO:0007669"/>
    <property type="project" value="UniProtKB-UniRule"/>
</dbReference>
<dbReference type="CDD" id="cd01583">
    <property type="entry name" value="IPMI"/>
    <property type="match status" value="1"/>
</dbReference>
<dbReference type="Gene3D" id="3.30.499.10">
    <property type="entry name" value="Aconitase, domain 3"/>
    <property type="match status" value="2"/>
</dbReference>
<dbReference type="HAMAP" id="MF_01027">
    <property type="entry name" value="LeuC_type2"/>
    <property type="match status" value="1"/>
</dbReference>
<dbReference type="InterPro" id="IPR015931">
    <property type="entry name" value="Acnase/IPM_dHydase_lsu_aba_1/3"/>
</dbReference>
<dbReference type="InterPro" id="IPR001030">
    <property type="entry name" value="Acoase/IPM_deHydtase_lsu_aba"/>
</dbReference>
<dbReference type="InterPro" id="IPR018136">
    <property type="entry name" value="Aconitase_4Fe-4S_BS"/>
</dbReference>
<dbReference type="InterPro" id="IPR036008">
    <property type="entry name" value="Aconitase_4Fe-4S_dom"/>
</dbReference>
<dbReference type="InterPro" id="IPR011826">
    <property type="entry name" value="HAcnase/IPMdehydase_lsu_prok"/>
</dbReference>
<dbReference type="InterPro" id="IPR006251">
    <property type="entry name" value="Homoacnase/IPMdehydase_lsu"/>
</dbReference>
<dbReference type="InterPro" id="IPR050067">
    <property type="entry name" value="IPM_dehydratase_rel_enz"/>
</dbReference>
<dbReference type="InterPro" id="IPR033941">
    <property type="entry name" value="IPMI_cat"/>
</dbReference>
<dbReference type="NCBIfam" id="TIGR01343">
    <property type="entry name" value="hacA_fam"/>
    <property type="match status" value="1"/>
</dbReference>
<dbReference type="NCBIfam" id="TIGR02086">
    <property type="entry name" value="IPMI_arch"/>
    <property type="match status" value="1"/>
</dbReference>
<dbReference type="NCBIfam" id="NF001614">
    <property type="entry name" value="PRK00402.1"/>
    <property type="match status" value="1"/>
</dbReference>
<dbReference type="PANTHER" id="PTHR43822:SF16">
    <property type="entry name" value="3-ISOPROPYLMALATE DEHYDRATASE LARGE SUBUNIT 2"/>
    <property type="match status" value="1"/>
</dbReference>
<dbReference type="PANTHER" id="PTHR43822">
    <property type="entry name" value="HOMOACONITASE, MITOCHONDRIAL-RELATED"/>
    <property type="match status" value="1"/>
</dbReference>
<dbReference type="Pfam" id="PF00330">
    <property type="entry name" value="Aconitase"/>
    <property type="match status" value="2"/>
</dbReference>
<dbReference type="PRINTS" id="PR00415">
    <property type="entry name" value="ACONITASE"/>
</dbReference>
<dbReference type="SUPFAM" id="SSF53732">
    <property type="entry name" value="Aconitase iron-sulfur domain"/>
    <property type="match status" value="1"/>
</dbReference>
<dbReference type="PROSITE" id="PS00450">
    <property type="entry name" value="ACONITASE_1"/>
    <property type="match status" value="1"/>
</dbReference>
<dbReference type="PROSITE" id="PS01244">
    <property type="entry name" value="ACONITASE_2"/>
    <property type="match status" value="1"/>
</dbReference>
<reference key="1">
    <citation type="journal article" date="2003" name="Science">
        <title>Genome of Geobacter sulfurreducens: metal reduction in subsurface environments.</title>
        <authorList>
            <person name="Methe B.A."/>
            <person name="Nelson K.E."/>
            <person name="Eisen J.A."/>
            <person name="Paulsen I.T."/>
            <person name="Nelson W.C."/>
            <person name="Heidelberg J.F."/>
            <person name="Wu D."/>
            <person name="Wu M."/>
            <person name="Ward N.L."/>
            <person name="Beanan M.J."/>
            <person name="Dodson R.J."/>
            <person name="Madupu R."/>
            <person name="Brinkac L.M."/>
            <person name="Daugherty S.C."/>
            <person name="DeBoy R.T."/>
            <person name="Durkin A.S."/>
            <person name="Gwinn M.L."/>
            <person name="Kolonay J.F."/>
            <person name="Sullivan S.A."/>
            <person name="Haft D.H."/>
            <person name="Selengut J."/>
            <person name="Davidsen T.M."/>
            <person name="Zafar N."/>
            <person name="White O."/>
            <person name="Tran B."/>
            <person name="Romero C."/>
            <person name="Forberger H.A."/>
            <person name="Weidman J.F."/>
            <person name="Khouri H.M."/>
            <person name="Feldblyum T.V."/>
            <person name="Utterback T.R."/>
            <person name="Van Aken S.E."/>
            <person name="Lovley D.R."/>
            <person name="Fraser C.M."/>
        </authorList>
    </citation>
    <scope>NUCLEOTIDE SEQUENCE [LARGE SCALE GENOMIC DNA]</scope>
    <source>
        <strain>ATCC 51573 / DSM 12127 / PCA</strain>
    </source>
</reference>
<proteinExistence type="inferred from homology"/>
<keyword id="KW-0004">4Fe-4S</keyword>
<keyword id="KW-0028">Amino-acid biosynthesis</keyword>
<keyword id="KW-0100">Branched-chain amino acid biosynthesis</keyword>
<keyword id="KW-0408">Iron</keyword>
<keyword id="KW-0411">Iron-sulfur</keyword>
<keyword id="KW-0432">Leucine biosynthesis</keyword>
<keyword id="KW-0456">Lyase</keyword>
<keyword id="KW-0479">Metal-binding</keyword>
<keyword id="KW-1185">Reference proteome</keyword>